<protein>
    <recommendedName>
        <fullName>Phenylalanine ammonia-lyase class 1</fullName>
        <ecNumber evidence="2">4.3.1.24</ecNumber>
    </recommendedName>
    <alternativeName>
        <fullName>Phenylalanine ammonia-lyase class I</fullName>
    </alternativeName>
</protein>
<keyword id="KW-0963">Cytoplasm</keyword>
<keyword id="KW-0456">Lyase</keyword>
<keyword id="KW-0585">Phenylalanine catabolism</keyword>
<keyword id="KW-0587">Phenylpropanoid metabolism</keyword>
<reference key="1">
    <citation type="journal article" date="1989" name="Plant Mol. Biol.">
        <title>Phenylalanine ammonia-lyase gene organisation and structure.</title>
        <authorList>
            <person name="Cramer C.L."/>
            <person name="Edwards K."/>
            <person name="Dron M."/>
            <person name="Liang X."/>
            <person name="Dildine S.L."/>
            <person name="Bolwell G.P."/>
            <person name="Dixon R.A."/>
            <person name="Lamb C.J."/>
            <person name="Schuch W."/>
        </authorList>
    </citation>
    <scope>NUCLEOTIDE SEQUENCE [MRNA]</scope>
</reference>
<reference key="2">
    <citation type="journal article" date="1985" name="Proc. Natl. Acad. Sci. U.S.A.">
        <title>Rapid transient induction of phenylalanine ammonia-lyase mRNA in elicitor-treated bean cells.</title>
        <authorList>
            <person name="Edwards K."/>
            <person name="Cramer C.L."/>
            <person name="Bolwell G.P."/>
            <person name="Dixon R.A."/>
            <person name="Schuch W."/>
            <person name="Lamb C.J."/>
        </authorList>
    </citation>
    <scope>NUCLEOTIDE SEQUENCE [MRNA]</scope>
</reference>
<dbReference type="EC" id="4.3.1.24" evidence="2"/>
<dbReference type="EMBL" id="M11939">
    <property type="protein sequence ID" value="AAA33770.1"/>
    <property type="status" value="ALT_INIT"/>
    <property type="molecule type" value="mRNA"/>
</dbReference>
<dbReference type="PIR" id="S04129">
    <property type="entry name" value="S04129"/>
</dbReference>
<dbReference type="SMR" id="P07218"/>
<dbReference type="eggNOG" id="KOG0222">
    <property type="taxonomic scope" value="Eukaryota"/>
</dbReference>
<dbReference type="UniPathway" id="UPA00713">
    <property type="reaction ID" value="UER00725"/>
</dbReference>
<dbReference type="GO" id="GO:0005737">
    <property type="term" value="C:cytoplasm"/>
    <property type="evidence" value="ECO:0007669"/>
    <property type="project" value="UniProtKB-SubCell"/>
</dbReference>
<dbReference type="GO" id="GO:0045548">
    <property type="term" value="F:phenylalanine ammonia-lyase activity"/>
    <property type="evidence" value="ECO:0007669"/>
    <property type="project" value="UniProtKB-EC"/>
</dbReference>
<dbReference type="GO" id="GO:0009800">
    <property type="term" value="P:cinnamic acid biosynthetic process"/>
    <property type="evidence" value="ECO:0007669"/>
    <property type="project" value="UniProtKB-UniPathway"/>
</dbReference>
<dbReference type="GO" id="GO:0006559">
    <property type="term" value="P:L-phenylalanine catabolic process"/>
    <property type="evidence" value="ECO:0007669"/>
    <property type="project" value="UniProtKB-KW"/>
</dbReference>
<dbReference type="CDD" id="cd00332">
    <property type="entry name" value="PAL-HAL"/>
    <property type="match status" value="1"/>
</dbReference>
<dbReference type="FunFam" id="1.10.274.20:FF:000001">
    <property type="entry name" value="Phenylalanine ammonia-lyase"/>
    <property type="match status" value="1"/>
</dbReference>
<dbReference type="FunFam" id="1.20.200.10:FF:000009">
    <property type="entry name" value="Phenylalanine ammonia-lyase"/>
    <property type="match status" value="1"/>
</dbReference>
<dbReference type="Gene3D" id="1.20.200.10">
    <property type="entry name" value="Fumarase/aspartase (Central domain)"/>
    <property type="match status" value="1"/>
</dbReference>
<dbReference type="Gene3D" id="1.10.275.10">
    <property type="entry name" value="Fumarase/aspartase (N-terminal domain)"/>
    <property type="match status" value="1"/>
</dbReference>
<dbReference type="Gene3D" id="1.10.274.20">
    <property type="entry name" value="Phenylalanine ammonia-lyase 1, domain 3"/>
    <property type="match status" value="1"/>
</dbReference>
<dbReference type="InterPro" id="IPR001106">
    <property type="entry name" value="Aromatic_Lyase"/>
</dbReference>
<dbReference type="InterPro" id="IPR024083">
    <property type="entry name" value="Fumarase/histidase_N"/>
</dbReference>
<dbReference type="InterPro" id="IPR008948">
    <property type="entry name" value="L-Aspartase-like"/>
</dbReference>
<dbReference type="InterPro" id="IPR005922">
    <property type="entry name" value="Phe_NH3-lyase"/>
</dbReference>
<dbReference type="InterPro" id="IPR023144">
    <property type="entry name" value="Phe_NH3-lyase_shielding_dom_sf"/>
</dbReference>
<dbReference type="NCBIfam" id="TIGR01226">
    <property type="entry name" value="phe_am_lyase"/>
    <property type="match status" value="1"/>
</dbReference>
<dbReference type="PANTHER" id="PTHR10362">
    <property type="entry name" value="HISTIDINE AMMONIA-LYASE"/>
    <property type="match status" value="1"/>
</dbReference>
<dbReference type="Pfam" id="PF00221">
    <property type="entry name" value="Lyase_aromatic"/>
    <property type="match status" value="1"/>
</dbReference>
<dbReference type="SUPFAM" id="SSF48557">
    <property type="entry name" value="L-aspartase-like"/>
    <property type="match status" value="1"/>
</dbReference>
<feature type="chain" id="PRO_0000215409" description="Phenylalanine ammonia-lyase class 1">
    <location>
        <begin position="1" status="less than"/>
        <end position="506"/>
    </location>
</feature>
<feature type="binding site" evidence="3">
    <location>
        <position position="50"/>
    </location>
    <ligand>
        <name>(E)-cinnamate</name>
        <dbReference type="ChEBI" id="CHEBI:15669"/>
    </ligand>
</feature>
<feature type="binding site" evidence="3">
    <location>
        <position position="138"/>
    </location>
    <ligand>
        <name>(E)-cinnamate</name>
        <dbReference type="ChEBI" id="CHEBI:15669"/>
    </ligand>
</feature>
<feature type="binding site" evidence="3">
    <location>
        <position position="144"/>
    </location>
    <ligand>
        <name>(E)-cinnamate</name>
        <dbReference type="ChEBI" id="CHEBI:15669"/>
    </ligand>
</feature>
<feature type="binding site" evidence="3">
    <location>
        <position position="174"/>
    </location>
    <ligand>
        <name>(E)-cinnamate</name>
        <dbReference type="ChEBI" id="CHEBI:15669"/>
    </ligand>
</feature>
<feature type="binding site" evidence="1">
    <location>
        <position position="246"/>
    </location>
    <ligand>
        <name>(E)-cinnamate</name>
        <dbReference type="ChEBI" id="CHEBI:15669"/>
    </ligand>
</feature>
<feature type="binding site" evidence="1">
    <location>
        <position position="274"/>
    </location>
    <ligand>
        <name>(E)-cinnamate</name>
        <dbReference type="ChEBI" id="CHEBI:15669"/>
    </ligand>
</feature>
<feature type="binding site" evidence="3">
    <location>
        <position position="277"/>
    </location>
    <ligand>
        <name>(E)-cinnamate</name>
        <dbReference type="ChEBI" id="CHEBI:15669"/>
    </ligand>
</feature>
<feature type="sequence conflict" description="In Ref. 2; AAA33770." evidence="4" ref="2">
    <original>V</original>
    <variation>E</variation>
    <location>
        <position position="20"/>
    </location>
</feature>
<feature type="non-terminal residue">
    <location>
        <position position="1"/>
    </location>
</feature>
<comment type="function">
    <text evidence="2">This is a key enzyme of plant metabolism catalyzing the first reaction in the biosynthesis from L-phenylalanine of a wide variety of natural products based on the phenylpropane skeleton.</text>
</comment>
<comment type="catalytic activity">
    <reaction evidence="2">
        <text>L-phenylalanine = (E)-cinnamate + NH4(+)</text>
        <dbReference type="Rhea" id="RHEA:21384"/>
        <dbReference type="ChEBI" id="CHEBI:15669"/>
        <dbReference type="ChEBI" id="CHEBI:28938"/>
        <dbReference type="ChEBI" id="CHEBI:58095"/>
        <dbReference type="EC" id="4.3.1.24"/>
    </reaction>
</comment>
<comment type="pathway">
    <text evidence="4">Phenylpropanoid metabolism; trans-cinnamate biosynthesis; trans-cinnamate from L-phenylalanine: step 1/1.</text>
</comment>
<comment type="subunit">
    <text evidence="2">Homotetramer.</text>
</comment>
<comment type="subcellular location">
    <subcellularLocation>
        <location evidence="4">Cytoplasm</location>
    </subcellularLocation>
</comment>
<comment type="PTM">
    <text evidence="3">Contains an active site 4-methylidene-imidazol-5-one (MIO), which is formed autocatalytically by cyclization and dehydration of residues Ala-Ser-Gly.</text>
</comment>
<comment type="similarity">
    <text evidence="4">Belongs to the PAL/histidase family.</text>
</comment>
<comment type="sequence caution" evidence="4">
    <conflict type="erroneous initiation">
        <sequence resource="EMBL-CDS" id="AAA33770"/>
    </conflict>
</comment>
<sequence length="506" mass="55853">YIAGLLTGRPNSKAVGPSGVVLTAKQAFELANINSEFYELQPKEGLALVNGTAVGSGMASIVLFDANILAVLSEVLSAIFAEVMQGKPEFTDHLTHKLKHHPGQIEAAAIMEHILDGSSYMKDAKKLHEIDPLQKPKQDRYALRTSPQWLGPLIEVIRFSTKSIEREINSVNDNPLIDVSRNKALHGGNFQGTPIGVSMDNTRLALASIGKLMFAQFSELVNDFYNNGLPSNLTASRNPSLDYGFKGAEIAMASYCSELQYLANPVTSHVQSAEQHNQDVNSLDLISARKTNESIEILKLMSSTFLMGLCQAIDLRHLEENLKSSVKNTVSQVSKRTLTTGGNGELHPSRFCEKDLLKVVDREYVFSYIDDPYSGTYPLMQKLRQVLVDHALINAENEKDVNTSIFQKIATFEEELKTILPKEVESTRAAYESGKAAIPNKIKECRSYPLYKFVREELGTGLLTGEKVKSPGEEFDKLFTAICQGKIIDPLLECLGEWNGAPLPIC</sequence>
<accession>P07218</accession>
<organism>
    <name type="scientific">Phaseolus vulgaris</name>
    <name type="common">Kidney bean</name>
    <name type="synonym">French bean</name>
    <dbReference type="NCBI Taxonomy" id="3885"/>
    <lineage>
        <taxon>Eukaryota</taxon>
        <taxon>Viridiplantae</taxon>
        <taxon>Streptophyta</taxon>
        <taxon>Embryophyta</taxon>
        <taxon>Tracheophyta</taxon>
        <taxon>Spermatophyta</taxon>
        <taxon>Magnoliopsida</taxon>
        <taxon>eudicotyledons</taxon>
        <taxon>Gunneridae</taxon>
        <taxon>Pentapetalae</taxon>
        <taxon>rosids</taxon>
        <taxon>fabids</taxon>
        <taxon>Fabales</taxon>
        <taxon>Fabaceae</taxon>
        <taxon>Papilionoideae</taxon>
        <taxon>50 kb inversion clade</taxon>
        <taxon>NPAAA clade</taxon>
        <taxon>indigoferoid/millettioid clade</taxon>
        <taxon>Phaseoleae</taxon>
        <taxon>Phaseolus</taxon>
    </lineage>
</organism>
<evidence type="ECO:0000250" key="1">
    <source>
        <dbReference type="UniProtKB" id="P11544"/>
    </source>
</evidence>
<evidence type="ECO:0000250" key="2">
    <source>
        <dbReference type="UniProtKB" id="P24481"/>
    </source>
</evidence>
<evidence type="ECO:0000250" key="3">
    <source>
        <dbReference type="UniProtKB" id="Q68G84"/>
    </source>
</evidence>
<evidence type="ECO:0000305" key="4"/>
<name>PAL1_PHAVU</name>
<proteinExistence type="evidence at transcript level"/>